<dbReference type="EC" id="3.1.27.-"/>
<dbReference type="EMBL" id="U19383">
    <property type="protein sequence ID" value="AAC49407.1"/>
    <property type="molecule type" value="mRNA"/>
</dbReference>
<dbReference type="EMBL" id="U48731">
    <property type="protein sequence ID" value="AAB42201.1"/>
    <property type="molecule type" value="Genomic_DNA"/>
</dbReference>
<dbReference type="SMR" id="P0CL70"/>
<dbReference type="EnsemblFungi" id="EAW14881">
    <property type="protein sequence ID" value="EAW14881"/>
    <property type="gene ID" value="ACLA_002920"/>
</dbReference>
<dbReference type="VEuPathDB" id="FungiDB:ACLA_002920"/>
<dbReference type="OMA" id="SSYPHWF"/>
<dbReference type="GO" id="GO:0005576">
    <property type="term" value="C:extracellular region"/>
    <property type="evidence" value="ECO:0000314"/>
    <property type="project" value="UniProtKB"/>
</dbReference>
<dbReference type="GO" id="GO:0003723">
    <property type="term" value="F:RNA binding"/>
    <property type="evidence" value="ECO:0007669"/>
    <property type="project" value="InterPro"/>
</dbReference>
<dbReference type="GO" id="GO:0004521">
    <property type="term" value="F:RNA endonuclease activity"/>
    <property type="evidence" value="ECO:0007669"/>
    <property type="project" value="InterPro"/>
</dbReference>
<dbReference type="GO" id="GO:0004540">
    <property type="term" value="F:RNA nuclease activity"/>
    <property type="evidence" value="ECO:0000314"/>
    <property type="project" value="UniProtKB"/>
</dbReference>
<dbReference type="GO" id="GO:2000766">
    <property type="term" value="P:negative regulation of cytoplasmic translation"/>
    <property type="evidence" value="ECO:0000314"/>
    <property type="project" value="UniProtKB"/>
</dbReference>
<dbReference type="CDD" id="cd00606">
    <property type="entry name" value="fungal_RNase"/>
    <property type="match status" value="1"/>
</dbReference>
<dbReference type="Gene3D" id="3.10.450.30">
    <property type="entry name" value="Microbial ribonucleases"/>
    <property type="match status" value="1"/>
</dbReference>
<dbReference type="InterPro" id="IPR004025">
    <property type="entry name" value="Fun_ribotoxin"/>
</dbReference>
<dbReference type="InterPro" id="IPR000026">
    <property type="entry name" value="N1-like"/>
</dbReference>
<dbReference type="InterPro" id="IPR016191">
    <property type="entry name" value="Ribonuclease/ribotoxin"/>
</dbReference>
<dbReference type="InterPro" id="IPR048269">
    <property type="entry name" value="RNase_U2"/>
</dbReference>
<dbReference type="Pfam" id="PF00545">
    <property type="entry name" value="Ribonuclease"/>
    <property type="match status" value="1"/>
</dbReference>
<dbReference type="PIRSF" id="PIRSF037430">
    <property type="entry name" value="RNase_U2"/>
    <property type="match status" value="1"/>
</dbReference>
<dbReference type="PRINTS" id="PR01704">
    <property type="entry name" value="FUNRIBOTOXIN"/>
</dbReference>
<dbReference type="SUPFAM" id="SSF53933">
    <property type="entry name" value="Microbial ribonucleases"/>
    <property type="match status" value="1"/>
</dbReference>
<proteinExistence type="evidence at transcript level"/>
<name>RNCL_ASPCV</name>
<keyword id="KW-1015">Disulfide bond</keyword>
<keyword id="KW-0378">Hydrolase</keyword>
<keyword id="KW-0540">Nuclease</keyword>
<keyword id="KW-0652">Protein synthesis inhibitor</keyword>
<keyword id="KW-0964">Secreted</keyword>
<keyword id="KW-0732">Signal</keyword>
<evidence type="ECO:0000250" key="1"/>
<evidence type="ECO:0000256" key="2">
    <source>
        <dbReference type="SAM" id="MobiDB-lite"/>
    </source>
</evidence>
<evidence type="ECO:0000269" key="3">
    <source>
    </source>
</evidence>
<evidence type="ECO:0000305" key="4"/>
<gene>
    <name type="primary">cla</name>
    <name type="synonym">c-sar</name>
</gene>
<accession>P0CL70</accession>
<accession>A1C5B3</accession>
<accession>P49074</accession>
<accession>P78572</accession>
<feature type="signal peptide" evidence="1">
    <location>
        <begin position="1"/>
        <end position="27"/>
    </location>
</feature>
<feature type="chain" id="PRO_0000030835" description="Ribonuclease clavin">
    <location>
        <begin position="28"/>
        <end position="177"/>
    </location>
</feature>
<feature type="region of interest" description="Disordered" evidence="2">
    <location>
        <begin position="98"/>
        <end position="117"/>
    </location>
</feature>
<feature type="compositionally biased region" description="Basic and acidic residues" evidence="2">
    <location>
        <begin position="102"/>
        <end position="117"/>
    </location>
</feature>
<feature type="active site" evidence="1">
    <location>
        <position position="77"/>
    </location>
</feature>
<feature type="active site" description="Proton acceptor" evidence="1">
    <location>
        <position position="123"/>
    </location>
</feature>
<feature type="active site" description="Proton donor" evidence="1">
    <location>
        <position position="164"/>
    </location>
</feature>
<feature type="disulfide bond" evidence="1">
    <location>
        <begin position="33"/>
        <end position="175"/>
    </location>
</feature>
<feature type="disulfide bond" evidence="1">
    <location>
        <begin position="103"/>
        <end position="159"/>
    </location>
</feature>
<feature type="sequence conflict" description="In Ref. 2; AAB42201." evidence="4" ref="2">
    <original>T</original>
    <variation>M</variation>
    <location>
        <position position="13"/>
    </location>
</feature>
<feature type="sequence conflict" description="In Ref. 2; AAB42201." evidence="4" ref="2">
    <original>W</original>
    <variation>L</variation>
    <location>
        <position position="98"/>
    </location>
</feature>
<feature type="sequence conflict" description="In Ref. 2; AAB42201." evidence="4" ref="2">
    <original>G</original>
    <variation>V</variation>
    <location>
        <position position="113"/>
    </location>
</feature>
<organism>
    <name type="scientific">Aspergillus clavatus</name>
    <dbReference type="NCBI Taxonomy" id="5057"/>
    <lineage>
        <taxon>Eukaryota</taxon>
        <taxon>Fungi</taxon>
        <taxon>Dikarya</taxon>
        <taxon>Ascomycota</taxon>
        <taxon>Pezizomycotina</taxon>
        <taxon>Eurotiomycetes</taxon>
        <taxon>Eurotiomycetidae</taxon>
        <taxon>Eurotiales</taxon>
        <taxon>Aspergillaceae</taxon>
        <taxon>Aspergillus</taxon>
        <taxon>Aspergillus subgen. Fumigati</taxon>
    </lineage>
</organism>
<sequence length="177" mass="19855">MVAIKNLVLVALTAVTALAMPSPLEERAATWTCMNEQKNPKTNKYENKRLLYNQNNAESNAHHAPLSDGKTGSSYPHWFTNGYDGDGKILKGRTPIKWGNSDCDRPPKHSKNGDGKNDHYLLEFPTFPDGHQYNFDSKKPKEDPGPARVIYTYPNKVFCGIVAHTRENQGDLKLCSH</sequence>
<protein>
    <recommendedName>
        <fullName>Ribonuclease clavin</fullName>
        <ecNumber>3.1.27.-</ecNumber>
    </recommendedName>
</protein>
<comment type="function">
    <text evidence="3">Clavin has the same substrate specificity as alpha-sarcin. It is specific for purines in both single- and double-stranded RNA. Its toxic action on eukaryotic cells is the result of cleavage of a single phosphodiester bond in the 60S subunit of ribosomes.</text>
</comment>
<comment type="subcellular location">
    <subcellularLocation>
        <location evidence="1">Secreted</location>
    </subcellularLocation>
</comment>
<comment type="similarity">
    <text evidence="4">Belongs to the ribonuclease U2 family.</text>
</comment>
<reference key="1">
    <citation type="journal article" date="1996" name="Eur. J. Biochem.">
        <title>Clavin, a type-1 ribosome-inactivating protein from Aspergillus clavatus IFO 8605. cDNA isolation, heterologous expression, biochemical and biological characterization of the recombinant protein.</title>
        <authorList>
            <person name="Parente D."/>
            <person name="Raucci G."/>
            <person name="Celano B."/>
            <person name="Pacilli A."/>
            <person name="Zanoni L."/>
            <person name="Canevari S."/>
            <person name="Adobati E."/>
            <person name="Colnaghi M.I."/>
            <person name="Dosio F."/>
            <person name="Arpicco S."/>
            <person name="Cattel L."/>
            <person name="Mele A."/>
            <person name="de Santis R."/>
        </authorList>
    </citation>
    <scope>NUCLEOTIDE SEQUENCE [MRNA]</scope>
    <scope>FUNCTION</scope>
    <source>
        <strain>NBRC 8605</strain>
    </source>
</reference>
<reference key="2">
    <citation type="journal article" date="1997" name="Toxicon">
        <title>Characterization of a new ribotoxin gene (c-sar) from Aspergillus clavatus.</title>
        <authorList>
            <person name="Huang K.-C."/>
            <person name="Hwang Y.-Y."/>
            <person name="Hwu L."/>
            <person name="Lin A."/>
        </authorList>
    </citation>
    <scope>NUCLEOTIDE SEQUENCE [GENOMIC DNA]</scope>
    <source>
        <strain>BCRC 32114</strain>
    </source>
</reference>